<accession>P06602</accession>
<accession>P07667</accession>
<accession>Q9V5E6</accession>
<reference key="1">
    <citation type="journal article" date="1986" name="Cell">
        <title>Isolation, structure, and expression of even-skipped: a second pair-rule gene of Drosophila containing a homeo box.</title>
        <authorList>
            <person name="McDonald P.M."/>
            <person name="Ingham P."/>
            <person name="Struhl G."/>
        </authorList>
    </citation>
    <scope>NUCLEOTIDE SEQUENCE [GENOMIC DNA]</scope>
</reference>
<reference key="2">
    <citation type="journal article" date="1987" name="EMBO J.">
        <title>Characterization and localization of the even-skipped protein of Drosophila.</title>
        <authorList>
            <person name="Frasch M."/>
            <person name="Hoey T."/>
            <person name="Rushlow C."/>
            <person name="Doyle H."/>
            <person name="Levine M."/>
        </authorList>
    </citation>
    <scope>NUCLEOTIDE SEQUENCE [MRNA]</scope>
</reference>
<reference key="3">
    <citation type="journal article" date="2000" name="Science">
        <title>The genome sequence of Drosophila melanogaster.</title>
        <authorList>
            <person name="Adams M.D."/>
            <person name="Celniker S.E."/>
            <person name="Holt R.A."/>
            <person name="Evans C.A."/>
            <person name="Gocayne J.D."/>
            <person name="Amanatides P.G."/>
            <person name="Scherer S.E."/>
            <person name="Li P.W."/>
            <person name="Hoskins R.A."/>
            <person name="Galle R.F."/>
            <person name="George R.A."/>
            <person name="Lewis S.E."/>
            <person name="Richards S."/>
            <person name="Ashburner M."/>
            <person name="Henderson S.N."/>
            <person name="Sutton G.G."/>
            <person name="Wortman J.R."/>
            <person name="Yandell M.D."/>
            <person name="Zhang Q."/>
            <person name="Chen L.X."/>
            <person name="Brandon R.C."/>
            <person name="Rogers Y.-H.C."/>
            <person name="Blazej R.G."/>
            <person name="Champe M."/>
            <person name="Pfeiffer B.D."/>
            <person name="Wan K.H."/>
            <person name="Doyle C."/>
            <person name="Baxter E.G."/>
            <person name="Helt G."/>
            <person name="Nelson C.R."/>
            <person name="Miklos G.L.G."/>
            <person name="Abril J.F."/>
            <person name="Agbayani A."/>
            <person name="An H.-J."/>
            <person name="Andrews-Pfannkoch C."/>
            <person name="Baldwin D."/>
            <person name="Ballew R.M."/>
            <person name="Basu A."/>
            <person name="Baxendale J."/>
            <person name="Bayraktaroglu L."/>
            <person name="Beasley E.M."/>
            <person name="Beeson K.Y."/>
            <person name="Benos P.V."/>
            <person name="Berman B.P."/>
            <person name="Bhandari D."/>
            <person name="Bolshakov S."/>
            <person name="Borkova D."/>
            <person name="Botchan M.R."/>
            <person name="Bouck J."/>
            <person name="Brokstein P."/>
            <person name="Brottier P."/>
            <person name="Burtis K.C."/>
            <person name="Busam D.A."/>
            <person name="Butler H."/>
            <person name="Cadieu E."/>
            <person name="Center A."/>
            <person name="Chandra I."/>
            <person name="Cherry J.M."/>
            <person name="Cawley S."/>
            <person name="Dahlke C."/>
            <person name="Davenport L.B."/>
            <person name="Davies P."/>
            <person name="de Pablos B."/>
            <person name="Delcher A."/>
            <person name="Deng Z."/>
            <person name="Mays A.D."/>
            <person name="Dew I."/>
            <person name="Dietz S.M."/>
            <person name="Dodson K."/>
            <person name="Doup L.E."/>
            <person name="Downes M."/>
            <person name="Dugan-Rocha S."/>
            <person name="Dunkov B.C."/>
            <person name="Dunn P."/>
            <person name="Durbin K.J."/>
            <person name="Evangelista C.C."/>
            <person name="Ferraz C."/>
            <person name="Ferriera S."/>
            <person name="Fleischmann W."/>
            <person name="Fosler C."/>
            <person name="Gabrielian A.E."/>
            <person name="Garg N.S."/>
            <person name="Gelbart W.M."/>
            <person name="Glasser K."/>
            <person name="Glodek A."/>
            <person name="Gong F."/>
            <person name="Gorrell J.H."/>
            <person name="Gu Z."/>
            <person name="Guan P."/>
            <person name="Harris M."/>
            <person name="Harris N.L."/>
            <person name="Harvey D.A."/>
            <person name="Heiman T.J."/>
            <person name="Hernandez J.R."/>
            <person name="Houck J."/>
            <person name="Hostin D."/>
            <person name="Houston K.A."/>
            <person name="Howland T.J."/>
            <person name="Wei M.-H."/>
            <person name="Ibegwam C."/>
            <person name="Jalali M."/>
            <person name="Kalush F."/>
            <person name="Karpen G.H."/>
            <person name="Ke Z."/>
            <person name="Kennison J.A."/>
            <person name="Ketchum K.A."/>
            <person name="Kimmel B.E."/>
            <person name="Kodira C.D."/>
            <person name="Kraft C.L."/>
            <person name="Kravitz S."/>
            <person name="Kulp D."/>
            <person name="Lai Z."/>
            <person name="Lasko P."/>
            <person name="Lei Y."/>
            <person name="Levitsky A.A."/>
            <person name="Li J.H."/>
            <person name="Li Z."/>
            <person name="Liang Y."/>
            <person name="Lin X."/>
            <person name="Liu X."/>
            <person name="Mattei B."/>
            <person name="McIntosh T.C."/>
            <person name="McLeod M.P."/>
            <person name="McPherson D."/>
            <person name="Merkulov G."/>
            <person name="Milshina N.V."/>
            <person name="Mobarry C."/>
            <person name="Morris J."/>
            <person name="Moshrefi A."/>
            <person name="Mount S.M."/>
            <person name="Moy M."/>
            <person name="Murphy B."/>
            <person name="Murphy L."/>
            <person name="Muzny D.M."/>
            <person name="Nelson D.L."/>
            <person name="Nelson D.R."/>
            <person name="Nelson K.A."/>
            <person name="Nixon K."/>
            <person name="Nusskern D.R."/>
            <person name="Pacleb J.M."/>
            <person name="Palazzolo M."/>
            <person name="Pittman G.S."/>
            <person name="Pan S."/>
            <person name="Pollard J."/>
            <person name="Puri V."/>
            <person name="Reese M.G."/>
            <person name="Reinert K."/>
            <person name="Remington K."/>
            <person name="Saunders R.D.C."/>
            <person name="Scheeler F."/>
            <person name="Shen H."/>
            <person name="Shue B.C."/>
            <person name="Siden-Kiamos I."/>
            <person name="Simpson M."/>
            <person name="Skupski M.P."/>
            <person name="Smith T.J."/>
            <person name="Spier E."/>
            <person name="Spradling A.C."/>
            <person name="Stapleton M."/>
            <person name="Strong R."/>
            <person name="Sun E."/>
            <person name="Svirskas R."/>
            <person name="Tector C."/>
            <person name="Turner R."/>
            <person name="Venter E."/>
            <person name="Wang A.H."/>
            <person name="Wang X."/>
            <person name="Wang Z.-Y."/>
            <person name="Wassarman D.A."/>
            <person name="Weinstock G.M."/>
            <person name="Weissenbach J."/>
            <person name="Williams S.M."/>
            <person name="Woodage T."/>
            <person name="Worley K.C."/>
            <person name="Wu D."/>
            <person name="Yang S."/>
            <person name="Yao Q.A."/>
            <person name="Ye J."/>
            <person name="Yeh R.-F."/>
            <person name="Zaveri J.S."/>
            <person name="Zhan M."/>
            <person name="Zhang G."/>
            <person name="Zhao Q."/>
            <person name="Zheng L."/>
            <person name="Zheng X.H."/>
            <person name="Zhong F.N."/>
            <person name="Zhong W."/>
            <person name="Zhou X."/>
            <person name="Zhu S.C."/>
            <person name="Zhu X."/>
            <person name="Smith H.O."/>
            <person name="Gibbs R.A."/>
            <person name="Myers E.W."/>
            <person name="Rubin G.M."/>
            <person name="Venter J.C."/>
        </authorList>
    </citation>
    <scope>NUCLEOTIDE SEQUENCE [LARGE SCALE GENOMIC DNA]</scope>
    <source>
        <strain>Berkeley</strain>
    </source>
</reference>
<reference key="4">
    <citation type="journal article" date="2002" name="Genome Biol.">
        <title>Annotation of the Drosophila melanogaster euchromatic genome: a systematic review.</title>
        <authorList>
            <person name="Misra S."/>
            <person name="Crosby M.A."/>
            <person name="Mungall C.J."/>
            <person name="Matthews B.B."/>
            <person name="Campbell K.S."/>
            <person name="Hradecky P."/>
            <person name="Huang Y."/>
            <person name="Kaminker J.S."/>
            <person name="Millburn G.H."/>
            <person name="Prochnik S.E."/>
            <person name="Smith C.D."/>
            <person name="Tupy J.L."/>
            <person name="Whitfield E.J."/>
            <person name="Bayraktaroglu L."/>
            <person name="Berman B.P."/>
            <person name="Bettencourt B.R."/>
            <person name="Celniker S.E."/>
            <person name="de Grey A.D.N.J."/>
            <person name="Drysdale R.A."/>
            <person name="Harris N.L."/>
            <person name="Richter J."/>
            <person name="Russo S."/>
            <person name="Schroeder A.J."/>
            <person name="Shu S.Q."/>
            <person name="Stapleton M."/>
            <person name="Yamada C."/>
            <person name="Ashburner M."/>
            <person name="Gelbart W.M."/>
            <person name="Rubin G.M."/>
            <person name="Lewis S.E."/>
        </authorList>
    </citation>
    <scope>GENOME REANNOTATION</scope>
    <source>
        <strain>Berkeley</strain>
    </source>
</reference>
<reference key="5">
    <citation type="journal article" date="1995" name="Mol. Biol. Evol.">
        <title>Evolutionary dynamics of the enhancer region of even-skipped in Drosophila.</title>
        <authorList>
            <person name="Ludwig M.Z."/>
            <person name="Kreitman M."/>
        </authorList>
    </citation>
    <scope>NUCLEOTIDE SEQUENCE [GENOMIC DNA] OF 1-58</scope>
    <source>
        <strain>AF-S</strain>
        <strain>FL-S</strain>
        <strain>Oregon-RC</strain>
        <strain>WA-F</strain>
        <strain>ZM56</strain>
    </source>
</reference>
<reference key="6">
    <citation type="journal article" date="1995" name="EMBO J.">
        <title>Structure of the even-skipped homeodomain complexed to AT-rich DNA: new perspectives on homeodomain specificity.</title>
        <authorList>
            <person name="Hirsch J.A."/>
            <person name="Aggarwal A.K."/>
        </authorList>
    </citation>
    <scope>X-RAY CRYSTALLOGRAPHY (2.0 ANGSTROMS) OF 70-189</scope>
</reference>
<proteinExistence type="evidence at protein level"/>
<evidence type="ECO:0000255" key="1">
    <source>
        <dbReference type="PROSITE-ProRule" id="PRU00108"/>
    </source>
</evidence>
<evidence type="ECO:0000256" key="2">
    <source>
        <dbReference type="SAM" id="MobiDB-lite"/>
    </source>
</evidence>
<evidence type="ECO:0000305" key="3"/>
<evidence type="ECO:0007829" key="4">
    <source>
        <dbReference type="PDB" id="1JGG"/>
    </source>
</evidence>
<keyword id="KW-0002">3D-structure</keyword>
<keyword id="KW-0217">Developmental protein</keyword>
<keyword id="KW-0238">DNA-binding</keyword>
<keyword id="KW-0371">Homeobox</keyword>
<keyword id="KW-0539">Nucleus</keyword>
<keyword id="KW-0562">Pair-rule protein</keyword>
<keyword id="KW-1185">Reference proteome</keyword>
<keyword id="KW-0804">Transcription</keyword>
<keyword id="KW-0805">Transcription regulation</keyword>
<comment type="function">
    <text>May play a role in determining neuronal identity. May be directly involved in specifying identity of individual neurons. Pair-rule protein required for segmentation; involved in transforming the broad, spatial, aperiodic expression patterns of the gap genes into a system of precise periodic expression patterns of the pair-rule and segmentary polarity genes.</text>
</comment>
<comment type="subcellular location">
    <subcellularLocation>
        <location>Nucleus</location>
    </subcellularLocation>
</comment>
<comment type="similarity">
    <text evidence="3">Belongs to the even-skipped homeobox family.</text>
</comment>
<feature type="chain" id="PRO_0000049060" description="Segmentation protein even-skipped">
    <location>
        <begin position="1"/>
        <end position="376"/>
    </location>
</feature>
<feature type="DNA-binding region" description="Homeobox" evidence="1">
    <location>
        <begin position="70"/>
        <end position="129"/>
    </location>
</feature>
<feature type="region of interest" description="Disordered" evidence="2">
    <location>
        <begin position="1"/>
        <end position="22"/>
    </location>
</feature>
<feature type="region of interest" description="Disordered" evidence="2">
    <location>
        <begin position="34"/>
        <end position="67"/>
    </location>
</feature>
<feature type="region of interest" description="Disordered" evidence="2">
    <location>
        <begin position="229"/>
        <end position="248"/>
    </location>
</feature>
<feature type="region of interest" description="Disordered" evidence="2">
    <location>
        <begin position="281"/>
        <end position="376"/>
    </location>
</feature>
<feature type="compositionally biased region" description="Basic and acidic residues" evidence="2">
    <location>
        <begin position="10"/>
        <end position="19"/>
    </location>
</feature>
<feature type="compositionally biased region" description="Polar residues" evidence="2">
    <location>
        <begin position="47"/>
        <end position="60"/>
    </location>
</feature>
<feature type="compositionally biased region" description="Low complexity" evidence="2">
    <location>
        <begin position="283"/>
        <end position="302"/>
    </location>
</feature>
<feature type="compositionally biased region" description="Low complexity" evidence="2">
    <location>
        <begin position="314"/>
        <end position="334"/>
    </location>
</feature>
<feature type="sequence conflict" description="In Ref. 1; AAA28522." evidence="3" ref="1">
    <original>L</original>
    <variation>V</variation>
    <location>
        <position position="300"/>
    </location>
</feature>
<feature type="helix" evidence="4">
    <location>
        <begin position="79"/>
        <end position="91"/>
    </location>
</feature>
<feature type="helix" evidence="4">
    <location>
        <begin position="97"/>
        <end position="107"/>
    </location>
</feature>
<feature type="helix" evidence="4">
    <location>
        <begin position="111"/>
        <end position="127"/>
    </location>
</feature>
<protein>
    <recommendedName>
        <fullName>Segmentation protein even-skipped</fullName>
    </recommendedName>
</protein>
<gene>
    <name type="primary">eve</name>
    <name type="ORF">CG2328</name>
</gene>
<name>EVE_DROME</name>
<sequence>MHGYRTYNMESHHAHHDASPVDQKPLVVDLLATQYGKPQTPPPSPNECLSSPDNSLNGSRGSEIPADPSVRRYRTAFTRDQLGRLEKEFYKENYVSRPRRCELAAQLNLPESTIKVWFQNRRMKDKRQRIAVAWPYAAVYSDPAFAASILQAAANSVGMPYPPYAPAAAAAAAAAAAVATNPMMATGMPPMGMPQMPTMQMPGHSGHAGHPSPYGQYRYTPYHIPARPAPPHPAGPHMHHPHMMGSSATGSSYSAGAAGLLGALPSATCYTGLGVGVPKTQTPPLDLQSSSSPHSSTLSLSPVGSDHAKVFDRSPVAQSAPSVPAPAPLTTTSPLPAPGLLMPSAKRPASDMSPPPTTTVIAEPKPKLFKPYKTEA</sequence>
<dbReference type="EMBL" id="M14767">
    <property type="protein sequence ID" value="AAA28522.1"/>
    <property type="molecule type" value="Genomic_DNA"/>
</dbReference>
<dbReference type="EMBL" id="X05138">
    <property type="protein sequence ID" value="CAA28784.1"/>
    <property type="molecule type" value="mRNA"/>
</dbReference>
<dbReference type="EMBL" id="AE013599">
    <property type="protein sequence ID" value="AAF58865.1"/>
    <property type="molecule type" value="Genomic_DNA"/>
</dbReference>
<dbReference type="EMBL" id="U32087">
    <property type="protein sequence ID" value="AAB05358.1"/>
    <property type="molecule type" value="Genomic_DNA"/>
</dbReference>
<dbReference type="EMBL" id="U32088">
    <property type="protein sequence ID" value="AAB05359.1"/>
    <property type="molecule type" value="Genomic_DNA"/>
</dbReference>
<dbReference type="EMBL" id="U32089">
    <property type="protein sequence ID" value="AAB05360.1"/>
    <property type="molecule type" value="Genomic_DNA"/>
</dbReference>
<dbReference type="EMBL" id="U32090">
    <property type="protein sequence ID" value="AAB05361.1"/>
    <property type="molecule type" value="Genomic_DNA"/>
</dbReference>
<dbReference type="EMBL" id="U32091">
    <property type="protein sequence ID" value="AAB05362.1"/>
    <property type="molecule type" value="Genomic_DNA"/>
</dbReference>
<dbReference type="PIR" id="A26066">
    <property type="entry name" value="A26066"/>
</dbReference>
<dbReference type="RefSeq" id="NP_523670.2">
    <property type="nucleotide sequence ID" value="NM_078946.4"/>
</dbReference>
<dbReference type="PDB" id="1JGG">
    <property type="method" value="X-ray"/>
    <property type="resolution" value="2.00 A"/>
    <property type="chains" value="A/B=70-129"/>
</dbReference>
<dbReference type="PDBsum" id="1JGG"/>
<dbReference type="SMR" id="P06602"/>
<dbReference type="BioGRID" id="61867">
    <property type="interactions" value="25"/>
</dbReference>
<dbReference type="FunCoup" id="P06602">
    <property type="interactions" value="9"/>
</dbReference>
<dbReference type="IntAct" id="P06602">
    <property type="interactions" value="2"/>
</dbReference>
<dbReference type="STRING" id="7227.FBpp0087478"/>
<dbReference type="PaxDb" id="7227-FBpp0087478"/>
<dbReference type="DNASU" id="36039"/>
<dbReference type="EnsemblMetazoa" id="FBtr0088390">
    <property type="protein sequence ID" value="FBpp0087478"/>
    <property type="gene ID" value="FBgn0000606"/>
</dbReference>
<dbReference type="GeneID" id="36039"/>
<dbReference type="KEGG" id="dme:Dmel_CG2328"/>
<dbReference type="AGR" id="FB:FBgn0000606"/>
<dbReference type="CTD" id="36039"/>
<dbReference type="FlyBase" id="FBgn0000606">
    <property type="gene designation" value="eve"/>
</dbReference>
<dbReference type="VEuPathDB" id="VectorBase:FBgn0000606"/>
<dbReference type="eggNOG" id="KOG0844">
    <property type="taxonomic scope" value="Eukaryota"/>
</dbReference>
<dbReference type="HOGENOM" id="CLU_065032_0_0_1"/>
<dbReference type="InParanoid" id="P06602"/>
<dbReference type="OMA" id="MESHHAH"/>
<dbReference type="OrthoDB" id="6159439at2759"/>
<dbReference type="PhylomeDB" id="P06602"/>
<dbReference type="SignaLink" id="P06602"/>
<dbReference type="BioGRID-ORCS" id="36039">
    <property type="hits" value="0 hits in 3 CRISPR screens"/>
</dbReference>
<dbReference type="EvolutionaryTrace" id="P06602"/>
<dbReference type="GenomeRNAi" id="36039"/>
<dbReference type="PRO" id="PR:P06602"/>
<dbReference type="Proteomes" id="UP000000803">
    <property type="component" value="Chromosome 2R"/>
</dbReference>
<dbReference type="Bgee" id="FBgn0000606">
    <property type="expression patterns" value="Expressed in embryonic/larval neuron (Drosophila) and 16 other cell types or tissues"/>
</dbReference>
<dbReference type="ExpressionAtlas" id="P06602">
    <property type="expression patterns" value="baseline and differential"/>
</dbReference>
<dbReference type="GO" id="GO:0005634">
    <property type="term" value="C:nucleus"/>
    <property type="evidence" value="ECO:0000314"/>
    <property type="project" value="FlyBase"/>
</dbReference>
<dbReference type="GO" id="GO:0003677">
    <property type="term" value="F:DNA binding"/>
    <property type="evidence" value="ECO:0000314"/>
    <property type="project" value="UniProtKB"/>
</dbReference>
<dbReference type="GO" id="GO:0003700">
    <property type="term" value="F:DNA-binding transcription factor activity"/>
    <property type="evidence" value="ECO:0000314"/>
    <property type="project" value="FlyBase"/>
</dbReference>
<dbReference type="GO" id="GO:0000981">
    <property type="term" value="F:DNA-binding transcription factor activity, RNA polymerase II-specific"/>
    <property type="evidence" value="ECO:0000314"/>
    <property type="project" value="FlyBase"/>
</dbReference>
<dbReference type="GO" id="GO:0000978">
    <property type="term" value="F:RNA polymerase II cis-regulatory region sequence-specific DNA binding"/>
    <property type="evidence" value="ECO:0000314"/>
    <property type="project" value="FlyBase"/>
</dbReference>
<dbReference type="GO" id="GO:0007512">
    <property type="term" value="P:adult heart development"/>
    <property type="evidence" value="ECO:0000315"/>
    <property type="project" value="FlyBase"/>
</dbReference>
<dbReference type="GO" id="GO:0007350">
    <property type="term" value="P:blastoderm segmentation"/>
    <property type="evidence" value="ECO:0000304"/>
    <property type="project" value="FlyBase"/>
</dbReference>
<dbReference type="GO" id="GO:0007376">
    <property type="term" value="P:cephalic furrow formation"/>
    <property type="evidence" value="ECO:0000315"/>
    <property type="project" value="FlyBase"/>
</dbReference>
<dbReference type="GO" id="GO:0007377">
    <property type="term" value="P:germ-band extension"/>
    <property type="evidence" value="ECO:0000315"/>
    <property type="project" value="FlyBase"/>
</dbReference>
<dbReference type="GO" id="GO:0003007">
    <property type="term" value="P:heart morphogenesis"/>
    <property type="evidence" value="ECO:0000315"/>
    <property type="project" value="FlyBase"/>
</dbReference>
<dbReference type="GO" id="GO:0008045">
    <property type="term" value="P:motor neuron axon guidance"/>
    <property type="evidence" value="ECO:0000315"/>
    <property type="project" value="FlyBase"/>
</dbReference>
<dbReference type="GO" id="GO:0009997">
    <property type="term" value="P:negative regulation of cardioblast cell fate specification"/>
    <property type="evidence" value="ECO:0000315"/>
    <property type="project" value="FlyBase"/>
</dbReference>
<dbReference type="GO" id="GO:0000122">
    <property type="term" value="P:negative regulation of transcription by RNA polymerase II"/>
    <property type="evidence" value="ECO:0000314"/>
    <property type="project" value="FlyBase"/>
</dbReference>
<dbReference type="GO" id="GO:0007366">
    <property type="term" value="P:periodic partitioning by pair rule gene"/>
    <property type="evidence" value="ECO:0000304"/>
    <property type="project" value="FlyBase"/>
</dbReference>
<dbReference type="GO" id="GO:0045944">
    <property type="term" value="P:positive regulation of transcription by RNA polymerase II"/>
    <property type="evidence" value="ECO:0000270"/>
    <property type="project" value="FlyBase"/>
</dbReference>
<dbReference type="GO" id="GO:0035289">
    <property type="term" value="P:posterior head segmentation"/>
    <property type="evidence" value="ECO:0000304"/>
    <property type="project" value="FlyBase"/>
</dbReference>
<dbReference type="GO" id="GO:0050770">
    <property type="term" value="P:regulation of axonogenesis"/>
    <property type="evidence" value="ECO:0000315"/>
    <property type="project" value="FlyBase"/>
</dbReference>
<dbReference type="GO" id="GO:1901739">
    <property type="term" value="P:regulation of myoblast fusion"/>
    <property type="evidence" value="ECO:0000315"/>
    <property type="project" value="FlyBase"/>
</dbReference>
<dbReference type="GO" id="GO:0006357">
    <property type="term" value="P:regulation of transcription by RNA polymerase II"/>
    <property type="evidence" value="ECO:0000318"/>
    <property type="project" value="GO_Central"/>
</dbReference>
<dbReference type="GO" id="GO:0035290">
    <property type="term" value="P:trunk segmentation"/>
    <property type="evidence" value="ECO:0000304"/>
    <property type="project" value="FlyBase"/>
</dbReference>
<dbReference type="CDD" id="cd00086">
    <property type="entry name" value="homeodomain"/>
    <property type="match status" value="1"/>
</dbReference>
<dbReference type="FunFam" id="1.10.10.60:FF:000256">
    <property type="entry name" value="Even-skipped homeobox 1"/>
    <property type="match status" value="1"/>
</dbReference>
<dbReference type="Gene3D" id="1.10.10.60">
    <property type="entry name" value="Homeodomain-like"/>
    <property type="match status" value="1"/>
</dbReference>
<dbReference type="InterPro" id="IPR052002">
    <property type="entry name" value="Even-skipped_HD"/>
</dbReference>
<dbReference type="InterPro" id="IPR001356">
    <property type="entry name" value="HD"/>
</dbReference>
<dbReference type="InterPro" id="IPR020479">
    <property type="entry name" value="HD_metazoa"/>
</dbReference>
<dbReference type="InterPro" id="IPR017970">
    <property type="entry name" value="Homeobox_CS"/>
</dbReference>
<dbReference type="InterPro" id="IPR009057">
    <property type="entry name" value="Homeodomain-like_sf"/>
</dbReference>
<dbReference type="PANTHER" id="PTHR46294">
    <property type="entry name" value="SEGMENTATION PROTEIN EVEN-SKIPPED"/>
    <property type="match status" value="1"/>
</dbReference>
<dbReference type="PANTHER" id="PTHR46294:SF4">
    <property type="entry name" value="SEGMENTATION PROTEIN EVEN-SKIPPED"/>
    <property type="match status" value="1"/>
</dbReference>
<dbReference type="Pfam" id="PF00046">
    <property type="entry name" value="Homeodomain"/>
    <property type="match status" value="1"/>
</dbReference>
<dbReference type="PRINTS" id="PR00024">
    <property type="entry name" value="HOMEOBOX"/>
</dbReference>
<dbReference type="SMART" id="SM00389">
    <property type="entry name" value="HOX"/>
    <property type="match status" value="1"/>
</dbReference>
<dbReference type="SUPFAM" id="SSF46689">
    <property type="entry name" value="Homeodomain-like"/>
    <property type="match status" value="1"/>
</dbReference>
<dbReference type="PROSITE" id="PS00027">
    <property type="entry name" value="HOMEOBOX_1"/>
    <property type="match status" value="1"/>
</dbReference>
<dbReference type="PROSITE" id="PS50071">
    <property type="entry name" value="HOMEOBOX_2"/>
    <property type="match status" value="1"/>
</dbReference>
<organism>
    <name type="scientific">Drosophila melanogaster</name>
    <name type="common">Fruit fly</name>
    <dbReference type="NCBI Taxonomy" id="7227"/>
    <lineage>
        <taxon>Eukaryota</taxon>
        <taxon>Metazoa</taxon>
        <taxon>Ecdysozoa</taxon>
        <taxon>Arthropoda</taxon>
        <taxon>Hexapoda</taxon>
        <taxon>Insecta</taxon>
        <taxon>Pterygota</taxon>
        <taxon>Neoptera</taxon>
        <taxon>Endopterygota</taxon>
        <taxon>Diptera</taxon>
        <taxon>Brachycera</taxon>
        <taxon>Muscomorpha</taxon>
        <taxon>Ephydroidea</taxon>
        <taxon>Drosophilidae</taxon>
        <taxon>Drosophila</taxon>
        <taxon>Sophophora</taxon>
    </lineage>
</organism>